<reference key="1">
    <citation type="journal article" date="2009" name="PLoS ONE">
        <title>Salmonella paratyphi C: genetic divergence from Salmonella choleraesuis and pathogenic convergence with Salmonella typhi.</title>
        <authorList>
            <person name="Liu W.-Q."/>
            <person name="Feng Y."/>
            <person name="Wang Y."/>
            <person name="Zou Q.-H."/>
            <person name="Chen F."/>
            <person name="Guo J.-T."/>
            <person name="Peng Y.-H."/>
            <person name="Jin Y."/>
            <person name="Li Y.-G."/>
            <person name="Hu S.-N."/>
            <person name="Johnston R.N."/>
            <person name="Liu G.-R."/>
            <person name="Liu S.-L."/>
        </authorList>
    </citation>
    <scope>NUCLEOTIDE SEQUENCE [LARGE SCALE GENOMIC DNA]</scope>
    <source>
        <strain>RKS4594</strain>
    </source>
</reference>
<accession>C0PWN3</accession>
<sequence>MSRGIIIIGSGFAARQLVKNIRKQDAHVPLTLIAADSMDEYNKPDLSHVISQSQRADDLTRQLAGEFAEQFNLRLFPHTWVADIDADAHVVKSQDKQWQYDKLVLATGAAALVPPIAGRELMLTLNSQQEYRACEIPLRDAQRVLIVGGGLIGSELAMDFCRAGKTVTLMDNAASLLASLMPPEVSSRLQHHLTDMGVHLLLKSQLQKLEKTEAGIRATLVSQHSIEVDAVIAATGLRPETALARRAGVVVNRGVCVDSYLQTSHPDIYAIGDCAEINGQVLPFLQPIQLSAMYLAKNLLGGNAPLKLPAMLVKVKTPELPLHLAGETQRRDLSWQITAESDGMIAKGMSGEGQLRAFVVSEDRMKEAFALLKTLSV</sequence>
<gene>
    <name evidence="1" type="primary">norW</name>
    <name evidence="1" type="synonym">flrR</name>
    <name type="ordered locus">SPC_2882</name>
</gene>
<dbReference type="EC" id="1.18.1.-" evidence="1"/>
<dbReference type="EMBL" id="CP000857">
    <property type="protein sequence ID" value="ACN46975.1"/>
    <property type="molecule type" value="Genomic_DNA"/>
</dbReference>
<dbReference type="RefSeq" id="WP_000086331.1">
    <property type="nucleotide sequence ID" value="NC_012125.1"/>
</dbReference>
<dbReference type="SMR" id="C0PWN3"/>
<dbReference type="KEGG" id="sei:SPC_2882"/>
<dbReference type="HOGENOM" id="CLU_003291_4_4_6"/>
<dbReference type="UniPathway" id="UPA00638"/>
<dbReference type="Proteomes" id="UP000001599">
    <property type="component" value="Chromosome"/>
</dbReference>
<dbReference type="GO" id="GO:0005737">
    <property type="term" value="C:cytoplasm"/>
    <property type="evidence" value="ECO:0007669"/>
    <property type="project" value="UniProtKB-SubCell"/>
</dbReference>
<dbReference type="GO" id="GO:0016731">
    <property type="term" value="F:oxidoreductase activity, acting on iron-sulfur proteins as donors, NAD or NADP as acceptor"/>
    <property type="evidence" value="ECO:0007669"/>
    <property type="project" value="UniProtKB-UniRule"/>
</dbReference>
<dbReference type="Gene3D" id="3.30.390.120">
    <property type="match status" value="1"/>
</dbReference>
<dbReference type="Gene3D" id="3.50.50.60">
    <property type="entry name" value="FAD/NAD(P)-binding domain"/>
    <property type="match status" value="2"/>
</dbReference>
<dbReference type="HAMAP" id="MF_01313">
    <property type="entry name" value="NorW"/>
    <property type="match status" value="1"/>
</dbReference>
<dbReference type="InterPro" id="IPR050260">
    <property type="entry name" value="FAD-bd_OxRdtase"/>
</dbReference>
<dbReference type="InterPro" id="IPR036188">
    <property type="entry name" value="FAD/NAD-bd_sf"/>
</dbReference>
<dbReference type="InterPro" id="IPR023753">
    <property type="entry name" value="FAD/NAD-binding_dom"/>
</dbReference>
<dbReference type="InterPro" id="IPR023961">
    <property type="entry name" value="NO_rdtase_NorW"/>
</dbReference>
<dbReference type="InterPro" id="IPR041364">
    <property type="entry name" value="Rbx-bd"/>
</dbReference>
<dbReference type="NCBIfam" id="NF003437">
    <property type="entry name" value="PRK04965.1"/>
    <property type="match status" value="1"/>
</dbReference>
<dbReference type="PANTHER" id="PTHR43429:SF3">
    <property type="entry name" value="NITRITE REDUCTASE [NAD(P)H]"/>
    <property type="match status" value="1"/>
</dbReference>
<dbReference type="PANTHER" id="PTHR43429">
    <property type="entry name" value="PYRIDINE NUCLEOTIDE-DISULFIDE OXIDOREDUCTASE DOMAIN-CONTAINING"/>
    <property type="match status" value="1"/>
</dbReference>
<dbReference type="Pfam" id="PF07992">
    <property type="entry name" value="Pyr_redox_2"/>
    <property type="match status" value="1"/>
</dbReference>
<dbReference type="Pfam" id="PF18113">
    <property type="entry name" value="Rbx_binding"/>
    <property type="match status" value="1"/>
</dbReference>
<dbReference type="PRINTS" id="PR00368">
    <property type="entry name" value="FADPNR"/>
</dbReference>
<dbReference type="PRINTS" id="PR00411">
    <property type="entry name" value="PNDRDTASEI"/>
</dbReference>
<dbReference type="SUPFAM" id="SSF51905">
    <property type="entry name" value="FAD/NAD(P)-binding domain"/>
    <property type="match status" value="1"/>
</dbReference>
<organism>
    <name type="scientific">Salmonella paratyphi C (strain RKS4594)</name>
    <dbReference type="NCBI Taxonomy" id="476213"/>
    <lineage>
        <taxon>Bacteria</taxon>
        <taxon>Pseudomonadati</taxon>
        <taxon>Pseudomonadota</taxon>
        <taxon>Gammaproteobacteria</taxon>
        <taxon>Enterobacterales</taxon>
        <taxon>Enterobacteriaceae</taxon>
        <taxon>Salmonella</taxon>
    </lineage>
</organism>
<evidence type="ECO:0000255" key="1">
    <source>
        <dbReference type="HAMAP-Rule" id="MF_01313"/>
    </source>
</evidence>
<feature type="chain" id="PRO_1000165586" description="Nitric oxide reductase FlRd-NAD(+) reductase">
    <location>
        <begin position="1"/>
        <end position="377"/>
    </location>
</feature>
<protein>
    <recommendedName>
        <fullName evidence="1">Nitric oxide reductase FlRd-NAD(+) reductase</fullName>
        <ecNumber evidence="1">1.18.1.-</ecNumber>
    </recommendedName>
    <alternativeName>
        <fullName evidence="1">Flavorubredoxin reductase</fullName>
        <shortName evidence="1">FlRd-reductase</shortName>
        <shortName evidence="1">FlavoRb reductase</shortName>
    </alternativeName>
</protein>
<comment type="function">
    <text evidence="1">One of at least two accessory proteins for anaerobic nitric oxide (NO) reductase. Reduces the rubredoxin moiety of NO reductase.</text>
</comment>
<comment type="catalytic activity">
    <reaction evidence="1">
        <text>2 reduced [nitric oxide reductase rubredoxin domain] + NAD(+) + H(+) = 2 oxidized [nitric oxide reductase rubredoxin domain] + NADH</text>
        <dbReference type="Rhea" id="RHEA:42960"/>
        <dbReference type="Rhea" id="RHEA-COMP:10304"/>
        <dbReference type="Rhea" id="RHEA-COMP:10305"/>
        <dbReference type="ChEBI" id="CHEBI:15378"/>
        <dbReference type="ChEBI" id="CHEBI:29033"/>
        <dbReference type="ChEBI" id="CHEBI:29034"/>
        <dbReference type="ChEBI" id="CHEBI:57540"/>
        <dbReference type="ChEBI" id="CHEBI:57945"/>
    </reaction>
</comment>
<comment type="cofactor">
    <cofactor evidence="1">
        <name>FAD</name>
        <dbReference type="ChEBI" id="CHEBI:57692"/>
    </cofactor>
</comment>
<comment type="pathway">
    <text evidence="1">Nitrogen metabolism; nitric oxide reduction.</text>
</comment>
<comment type="subcellular location">
    <subcellularLocation>
        <location evidence="1">Cytoplasm</location>
    </subcellularLocation>
</comment>
<comment type="similarity">
    <text evidence="1">Belongs to the FAD-dependent oxidoreductase family.</text>
</comment>
<keyword id="KW-0963">Cytoplasm</keyword>
<keyword id="KW-0274">FAD</keyword>
<keyword id="KW-0285">Flavoprotein</keyword>
<keyword id="KW-0520">NAD</keyword>
<keyword id="KW-0560">Oxidoreductase</keyword>
<proteinExistence type="inferred from homology"/>
<name>NORW_SALPC</name>